<keyword id="KW-0002">3D-structure</keyword>
<keyword id="KW-0216">Detoxification</keyword>
<keyword id="KW-0378">Hydrolase</keyword>
<keyword id="KW-1185">Reference proteome</keyword>
<feature type="chain" id="PRO_0000438587" description="Epoxide hydrolase B">
    <location>
        <begin position="1"/>
        <end position="356"/>
    </location>
</feature>
<feature type="domain" description="AB hydrolase-1" evidence="1">
    <location>
        <begin position="28"/>
        <end position="129"/>
    </location>
</feature>
<feature type="active site" description="Nucleophile" evidence="5">
    <location>
        <position position="104"/>
    </location>
</feature>
<feature type="active site" description="Proton acceptor" evidence="5">
    <location>
        <position position="333"/>
    </location>
</feature>
<feature type="site" description="Contributes to the formation of an oxyanion binding site for the epoxide oxygen of substrate" evidence="5">
    <location>
        <position position="164"/>
    </location>
</feature>
<feature type="site" description="Contributes to the formation of an oxyanion binding site for the epoxide oxygen of substrate" evidence="5">
    <location>
        <position position="272"/>
    </location>
</feature>
<feature type="site" description="Plays an orienting role for the imidazole group of His-333" evidence="5">
    <location>
        <position position="302"/>
    </location>
</feature>
<feature type="strand" evidence="6">
    <location>
        <begin position="5"/>
        <end position="10"/>
    </location>
</feature>
<feature type="strand" evidence="6">
    <location>
        <begin position="13"/>
        <end position="20"/>
    </location>
</feature>
<feature type="strand" evidence="6">
    <location>
        <begin position="29"/>
        <end position="33"/>
    </location>
</feature>
<feature type="helix" evidence="6">
    <location>
        <begin position="40"/>
        <end position="43"/>
    </location>
</feature>
<feature type="turn" evidence="6">
    <location>
        <begin position="44"/>
        <end position="46"/>
    </location>
</feature>
<feature type="helix" evidence="6">
    <location>
        <begin position="47"/>
        <end position="52"/>
    </location>
</feature>
<feature type="strand" evidence="6">
    <location>
        <begin position="56"/>
        <end position="60"/>
    </location>
</feature>
<feature type="helix" evidence="6">
    <location>
        <begin position="74"/>
        <end position="77"/>
    </location>
</feature>
<feature type="helix" evidence="6">
    <location>
        <begin position="79"/>
        <end position="92"/>
    </location>
</feature>
<feature type="strand" evidence="6">
    <location>
        <begin position="98"/>
        <end position="103"/>
    </location>
</feature>
<feature type="helix" evidence="6">
    <location>
        <begin position="106"/>
        <end position="116"/>
    </location>
</feature>
<feature type="helix" evidence="6">
    <location>
        <begin position="118"/>
        <end position="120"/>
    </location>
</feature>
<feature type="strand" evidence="6">
    <location>
        <begin position="121"/>
        <end position="129"/>
    </location>
</feature>
<feature type="helix" evidence="6">
    <location>
        <begin position="133"/>
        <end position="135"/>
    </location>
</feature>
<feature type="helix" evidence="6">
    <location>
        <begin position="149"/>
        <end position="154"/>
    </location>
</feature>
<feature type="strand" evidence="6">
    <location>
        <begin position="155"/>
        <end position="157"/>
    </location>
</feature>
<feature type="strand" evidence="6">
    <location>
        <begin position="159"/>
        <end position="163"/>
    </location>
</feature>
<feature type="helix" evidence="6">
    <location>
        <begin position="164"/>
        <end position="170"/>
    </location>
</feature>
<feature type="helix" evidence="6">
    <location>
        <begin position="173"/>
        <end position="179"/>
    </location>
</feature>
<feature type="helix" evidence="6">
    <location>
        <begin position="182"/>
        <end position="192"/>
    </location>
</feature>
<feature type="helix" evidence="6">
    <location>
        <begin position="195"/>
        <end position="203"/>
    </location>
</feature>
<feature type="helix" evidence="6">
    <location>
        <begin position="217"/>
        <end position="219"/>
    </location>
</feature>
<feature type="strand" evidence="6">
    <location>
        <begin position="227"/>
        <end position="229"/>
    </location>
</feature>
<feature type="helix" evidence="6">
    <location>
        <begin position="234"/>
        <end position="237"/>
    </location>
</feature>
<feature type="strand" evidence="7">
    <location>
        <begin position="246"/>
        <end position="248"/>
    </location>
</feature>
<feature type="helix" evidence="6">
    <location>
        <begin position="250"/>
        <end position="263"/>
    </location>
</feature>
<feature type="helix" evidence="6">
    <location>
        <begin position="266"/>
        <end position="273"/>
    </location>
</feature>
<feature type="helix" evidence="6">
    <location>
        <begin position="275"/>
        <end position="281"/>
    </location>
</feature>
<feature type="helix" evidence="6">
    <location>
        <begin position="283"/>
        <end position="285"/>
    </location>
</feature>
<feature type="strand" evidence="6">
    <location>
        <begin position="294"/>
        <end position="299"/>
    </location>
</feature>
<feature type="helix" evidence="6">
    <location>
        <begin position="303"/>
        <end position="307"/>
    </location>
</feature>
<feature type="helix" evidence="6">
    <location>
        <begin position="309"/>
        <end position="313"/>
    </location>
</feature>
<feature type="helix" evidence="6">
    <location>
        <begin position="315"/>
        <end position="318"/>
    </location>
</feature>
<feature type="strand" evidence="6">
    <location>
        <begin position="322"/>
        <end position="330"/>
    </location>
</feature>
<feature type="helix" evidence="6">
    <location>
        <begin position="335"/>
        <end position="338"/>
    </location>
</feature>
<feature type="helix" evidence="6">
    <location>
        <begin position="340"/>
        <end position="352"/>
    </location>
</feature>
<organism>
    <name type="scientific">Mycobacterium tuberculosis (strain CDC 1551 / Oshkosh)</name>
    <dbReference type="NCBI Taxonomy" id="83331"/>
    <lineage>
        <taxon>Bacteria</taxon>
        <taxon>Bacillati</taxon>
        <taxon>Actinomycetota</taxon>
        <taxon>Actinomycetes</taxon>
        <taxon>Mycobacteriales</taxon>
        <taxon>Mycobacteriaceae</taxon>
        <taxon>Mycobacterium</taxon>
        <taxon>Mycobacterium tuberculosis complex</taxon>
    </lineage>
</organism>
<gene>
    <name type="ordered locus">MT1988</name>
</gene>
<protein>
    <recommendedName>
        <fullName evidence="3">Epoxide hydrolase B</fullName>
        <shortName evidence="3">EHB</shortName>
        <ecNumber evidence="5">3.3.2.10</ecNumber>
    </recommendedName>
</protein>
<reference key="1">
    <citation type="journal article" date="2002" name="J. Bacteriol.">
        <title>Whole-genome comparison of Mycobacterium tuberculosis clinical and laboratory strains.</title>
        <authorList>
            <person name="Fleischmann R.D."/>
            <person name="Alland D."/>
            <person name="Eisen J.A."/>
            <person name="Carpenter L."/>
            <person name="White O."/>
            <person name="Peterson J.D."/>
            <person name="DeBoy R.T."/>
            <person name="Dodson R.J."/>
            <person name="Gwinn M.L."/>
            <person name="Haft D.H."/>
            <person name="Hickey E.K."/>
            <person name="Kolonay J.F."/>
            <person name="Nelson W.C."/>
            <person name="Umayam L.A."/>
            <person name="Ermolaeva M.D."/>
            <person name="Salzberg S.L."/>
            <person name="Delcher A."/>
            <person name="Utterback T.R."/>
            <person name="Weidman J.F."/>
            <person name="Khouri H.M."/>
            <person name="Gill J."/>
            <person name="Mikula A."/>
            <person name="Bishai W."/>
            <person name="Jacobs W.R. Jr."/>
            <person name="Venter J.C."/>
            <person name="Fraser C.M."/>
        </authorList>
    </citation>
    <scope>NUCLEOTIDE SEQUENCE [LARGE SCALE GENOMIC DNA]</scope>
    <source>
        <strain>CDC 1551 / Oshkosh</strain>
    </source>
</reference>
<reference key="2">
    <citation type="journal article" date="2008" name="J. Mol. Biol.">
        <title>The molecular structure of epoxide hydrolase B from Mycobacterium tuberculosis and its complex with a urea-based inhibitor.</title>
        <authorList>
            <person name="Biswal B.K."/>
            <person name="Morisseau C."/>
            <person name="Garen G."/>
            <person name="Cherney M.M."/>
            <person name="Garen C."/>
            <person name="Niu C."/>
            <person name="Hammock B.D."/>
            <person name="James M.N."/>
        </authorList>
    </citation>
    <scope>X-RAY CRYSTALLOGRAPHY (2.40 ANGSTROMS) OF 2-356 IN COMPLEX WITH SUBSTRATE ANALOG</scope>
    <scope>FUNCTION</scope>
    <scope>CATALYTIC ACTIVITY</scope>
    <scope>ACTIVE SITE</scope>
    <scope>SUBUNIT</scope>
    <scope>SUBSTRATE SPECIFICITY</scope>
    <scope>REACTION MECHANISM</scope>
</reference>
<name>EPHB_MYCTO</name>
<dbReference type="EC" id="3.3.2.10" evidence="5"/>
<dbReference type="EMBL" id="AE000516">
    <property type="protein sequence ID" value="AAK46260.1"/>
    <property type="molecule type" value="Genomic_DNA"/>
</dbReference>
<dbReference type="PIR" id="F70636">
    <property type="entry name" value="F70636"/>
</dbReference>
<dbReference type="PDB" id="2E3J">
    <property type="method" value="X-ray"/>
    <property type="resolution" value="2.10 A"/>
    <property type="chains" value="A=2-356"/>
</dbReference>
<dbReference type="PDB" id="2ZJF">
    <property type="method" value="X-ray"/>
    <property type="resolution" value="2.40 A"/>
    <property type="chains" value="A=2-356"/>
</dbReference>
<dbReference type="PDBsum" id="2E3J"/>
<dbReference type="PDBsum" id="2ZJF"/>
<dbReference type="SMR" id="P95276"/>
<dbReference type="BindingDB" id="P95276"/>
<dbReference type="ChEMBL" id="CHEMBL1795155"/>
<dbReference type="DrugBank" id="DB07496">
    <property type="generic name" value="1,3-diphenylurea"/>
</dbReference>
<dbReference type="DrugCentral" id="P95276"/>
<dbReference type="ESTHER" id="myctu-ephB">
    <property type="family name" value="Epoxide_hydrolase"/>
</dbReference>
<dbReference type="MEROPS" id="S33.971"/>
<dbReference type="KEGG" id="mtc:MT1988"/>
<dbReference type="PATRIC" id="fig|83331.31.peg.2142"/>
<dbReference type="HOGENOM" id="CLU_020336_7_2_11"/>
<dbReference type="EvolutionaryTrace" id="P95276"/>
<dbReference type="Proteomes" id="UP000001020">
    <property type="component" value="Chromosome"/>
</dbReference>
<dbReference type="GO" id="GO:0004301">
    <property type="term" value="F:epoxide hydrolase activity"/>
    <property type="evidence" value="ECO:0000314"/>
    <property type="project" value="MTBBASE"/>
</dbReference>
<dbReference type="GO" id="GO:0042803">
    <property type="term" value="F:protein homodimerization activity"/>
    <property type="evidence" value="ECO:0000353"/>
    <property type="project" value="MTBBASE"/>
</dbReference>
<dbReference type="GO" id="GO:0009636">
    <property type="term" value="P:response to toxic substance"/>
    <property type="evidence" value="ECO:0007669"/>
    <property type="project" value="UniProtKB-KW"/>
</dbReference>
<dbReference type="FunFam" id="3.40.50.1820:FF:000417">
    <property type="entry name" value="Epoxide hydrolase B"/>
    <property type="match status" value="1"/>
</dbReference>
<dbReference type="Gene3D" id="3.40.50.1820">
    <property type="entry name" value="alpha/beta hydrolase"/>
    <property type="match status" value="1"/>
</dbReference>
<dbReference type="InterPro" id="IPR000073">
    <property type="entry name" value="AB_hydrolase_1"/>
</dbReference>
<dbReference type="InterPro" id="IPR029058">
    <property type="entry name" value="AB_hydrolase_fold"/>
</dbReference>
<dbReference type="InterPro" id="IPR000639">
    <property type="entry name" value="Epox_hydrolase-like"/>
</dbReference>
<dbReference type="PANTHER" id="PTHR43329">
    <property type="entry name" value="EPOXIDE HYDROLASE"/>
    <property type="match status" value="1"/>
</dbReference>
<dbReference type="Pfam" id="PF00561">
    <property type="entry name" value="Abhydrolase_1"/>
    <property type="match status" value="1"/>
</dbReference>
<dbReference type="PRINTS" id="PR00111">
    <property type="entry name" value="ABHYDROLASE"/>
</dbReference>
<dbReference type="PRINTS" id="PR00412">
    <property type="entry name" value="EPOXHYDRLASE"/>
</dbReference>
<dbReference type="SUPFAM" id="SSF53474">
    <property type="entry name" value="alpha/beta-Hydrolases"/>
    <property type="match status" value="1"/>
</dbReference>
<evidence type="ECO:0000255" key="1"/>
<evidence type="ECO:0000269" key="2">
    <source>
    </source>
</evidence>
<evidence type="ECO:0000303" key="3">
    <source>
    </source>
</evidence>
<evidence type="ECO:0000305" key="4"/>
<evidence type="ECO:0000305" key="5">
    <source>
    </source>
</evidence>
<evidence type="ECO:0007829" key="6">
    <source>
        <dbReference type="PDB" id="2E3J"/>
    </source>
</evidence>
<evidence type="ECO:0007829" key="7">
    <source>
        <dbReference type="PDB" id="2ZJF"/>
    </source>
</evidence>
<comment type="function">
    <text evidence="2">Could be involved in detoxification of extraneous host-cell epoxides. Catalyzes the hydrolysis of small aromatic epoxide-containing substrates such as trans-1,3-diphenylpropene oxide, trans and cis-stilbene oxide, and terpenoid epoxide.</text>
</comment>
<comment type="catalytic activity">
    <reaction evidence="5">
        <text>an epoxide + H2O = an ethanediol</text>
        <dbReference type="Rhea" id="RHEA:19037"/>
        <dbReference type="ChEBI" id="CHEBI:15377"/>
        <dbReference type="ChEBI" id="CHEBI:32955"/>
        <dbReference type="ChEBI" id="CHEBI:140594"/>
        <dbReference type="EC" id="3.3.2.10"/>
    </reaction>
</comment>
<comment type="subunit">
    <text evidence="2">Homodimer.</text>
</comment>
<comment type="similarity">
    <text evidence="4">Belongs to the AB hydrolase superfamily. Epoxide hydrolase family.</text>
</comment>
<accession>P95276</accession>
<accession>F2GGS7</accession>
<accession>Q7D7R2</accession>
<sequence length="356" mass="39297">MSQVHRILNCRGTRIHAVADSPPDQQGPLVVLLHGFPESWYSWRHQIPALAGAGYRVVAIDQRGYGRSSKYRVQKAYRIKELVGDVVGVLDSYGAEQAFVVGHDWGAPVAWTFAWLHPDRCAGVVGISVPFAGRGVIGLPGSPFGERRPSDYHLELAGPGRVWYQDYFAVQDGIITEIEEDLRGWLLGLTYTVSGEGMMAATKAAVDAGVDLESMDPIDVIRAGPLCMAEGARLKDAFVYPETMPAWFTEADLDFYTGEFERSGFGGPLSFYHNIDNDWHDLADQQGKPLTPPALFIGGQYDVGTIWGAQAIERAHEVMPNYRGTHMIADVGHWIQQEAPEETNRLLLDFLGGLRP</sequence>
<proteinExistence type="evidence at protein level"/>